<dbReference type="EC" id="3.1.4.17" evidence="7"/>
<dbReference type="EMBL" id="AF159298">
    <property type="protein sequence ID" value="AAF63857.1"/>
    <property type="molecule type" value="mRNA"/>
</dbReference>
<dbReference type="EMBL" id="AY845864">
    <property type="protein sequence ID" value="AAW31879.1"/>
    <property type="molecule type" value="mRNA"/>
</dbReference>
<dbReference type="EMBL" id="U56649">
    <property type="protein sequence ID" value="AAB03319.1"/>
    <property type="status" value="ALT_SEQ"/>
    <property type="molecule type" value="mRNA"/>
</dbReference>
<dbReference type="EMBL" id="AK043647">
    <property type="protein sequence ID" value="BAC31606.1"/>
    <property type="molecule type" value="mRNA"/>
</dbReference>
<dbReference type="EMBL" id="AL844577">
    <property type="status" value="NOT_ANNOTATED_CDS"/>
    <property type="molecule type" value="Genomic_DNA"/>
</dbReference>
<dbReference type="EMBL" id="AL928607">
    <property type="status" value="NOT_ANNOTATED_CDS"/>
    <property type="molecule type" value="Genomic_DNA"/>
</dbReference>
<dbReference type="EMBL" id="AL928811">
    <property type="status" value="NOT_ANNOTATED_CDS"/>
    <property type="molecule type" value="Genomic_DNA"/>
</dbReference>
<dbReference type="EMBL" id="CH466519">
    <property type="protein sequence ID" value="EDL27255.1"/>
    <property type="molecule type" value="Genomic_DNA"/>
</dbReference>
<dbReference type="EMBL" id="CH466519">
    <property type="protein sequence ID" value="EDL27256.1"/>
    <property type="molecule type" value="Genomic_DNA"/>
</dbReference>
<dbReference type="EMBL" id="CH466519">
    <property type="protein sequence ID" value="EDL27257.1"/>
    <property type="molecule type" value="Genomic_DNA"/>
</dbReference>
<dbReference type="EMBL" id="BC090628">
    <property type="protein sequence ID" value="AAH90628.1"/>
    <property type="molecule type" value="mRNA"/>
</dbReference>
<dbReference type="EMBL" id="AF023529">
    <property type="protein sequence ID" value="AAB81952.1"/>
    <property type="molecule type" value="mRNA"/>
</dbReference>
<dbReference type="CCDS" id="CCDS16172.1">
    <molecule id="Q61481-4"/>
</dbReference>
<dbReference type="CCDS" id="CCDS16173.1">
    <molecule id="Q61481-5"/>
</dbReference>
<dbReference type="CCDS" id="CCDS16174.1">
    <molecule id="Q61481-6"/>
</dbReference>
<dbReference type="RefSeq" id="NP_001009978.1">
    <molecule id="Q61481-5"/>
    <property type="nucleotide sequence ID" value="NM_001009978.2"/>
</dbReference>
<dbReference type="RefSeq" id="NP_001009979.1">
    <molecule id="Q61481-6"/>
    <property type="nucleotide sequence ID" value="NM_001009979.2"/>
</dbReference>
<dbReference type="RefSeq" id="NP_001153054.1">
    <molecule id="Q61481-4"/>
    <property type="nucleotide sequence ID" value="NM_001159582.2"/>
</dbReference>
<dbReference type="RefSeq" id="NP_001342069.1">
    <molecule id="Q61481-4"/>
    <property type="nucleotide sequence ID" value="NM_001355140.2"/>
</dbReference>
<dbReference type="RefSeq" id="NP_001342070.1">
    <molecule id="Q61481-4"/>
    <property type="nucleotide sequence ID" value="NM_001355141.2"/>
</dbReference>
<dbReference type="RefSeq" id="NP_001342071.1">
    <molecule id="Q61481-2"/>
    <property type="nucleotide sequence ID" value="NM_001355142.2"/>
</dbReference>
<dbReference type="RefSeq" id="NP_058024.2">
    <molecule id="Q61481-4"/>
    <property type="nucleotide sequence ID" value="NM_016744.4"/>
</dbReference>
<dbReference type="RefSeq" id="XP_006498982.1">
    <molecule id="Q61481-4"/>
    <property type="nucleotide sequence ID" value="XM_006498919.4"/>
</dbReference>
<dbReference type="RefSeq" id="XP_006498983.1">
    <property type="nucleotide sequence ID" value="XM_006498920.3"/>
</dbReference>
<dbReference type="RefSeq" id="XP_006498984.1">
    <property type="nucleotide sequence ID" value="XM_006498921.3"/>
</dbReference>
<dbReference type="RefSeq" id="XP_006498986.1">
    <property type="nucleotide sequence ID" value="XM_006498923.3"/>
</dbReference>
<dbReference type="SMR" id="Q61481"/>
<dbReference type="BioGRID" id="202074">
    <property type="interactions" value="8"/>
</dbReference>
<dbReference type="CORUM" id="Q61481"/>
<dbReference type="FunCoup" id="Q61481">
    <property type="interactions" value="1702"/>
</dbReference>
<dbReference type="IntAct" id="Q61481">
    <property type="interactions" value="3"/>
</dbReference>
<dbReference type="MINT" id="Q61481"/>
<dbReference type="STRING" id="10090.ENSMUSP00000099715"/>
<dbReference type="GlyGen" id="Q61481">
    <property type="glycosylation" value="1 site, 1 N-linked glycan (1 site)"/>
</dbReference>
<dbReference type="iPTMnet" id="Q61481"/>
<dbReference type="PhosphoSitePlus" id="Q61481"/>
<dbReference type="SwissPalm" id="Q61481"/>
<dbReference type="PaxDb" id="10090-ENSMUSP00000099711"/>
<dbReference type="PeptideAtlas" id="Q61481"/>
<dbReference type="ProteomicsDB" id="294038">
    <molecule id="Q61481-4"/>
</dbReference>
<dbReference type="ProteomicsDB" id="294039">
    <molecule id="Q61481-2"/>
</dbReference>
<dbReference type="ProteomicsDB" id="337264"/>
<dbReference type="ProteomicsDB" id="340829"/>
<dbReference type="ProteomicsDB" id="344638"/>
<dbReference type="Antibodypedia" id="19750">
    <property type="antibodies" value="281 antibodies from 34 providers"/>
</dbReference>
<dbReference type="DNASU" id="18573"/>
<dbReference type="Ensembl" id="ENSMUST00000102651.10">
    <molecule id="Q61481-6"/>
    <property type="protein sequence ID" value="ENSMUSP00000099711.4"/>
    <property type="gene ID" value="ENSMUSG00000059173.21"/>
</dbReference>
<dbReference type="Ensembl" id="ENSMUST00000102652.10">
    <molecule id="Q61481-5"/>
    <property type="protein sequence ID" value="ENSMUSP00000099712.4"/>
    <property type="gene ID" value="ENSMUSG00000059173.21"/>
</dbReference>
<dbReference type="Ensembl" id="ENSMUST00000102653.8">
    <molecule id="Q61481-4"/>
    <property type="protein sequence ID" value="ENSMUSP00000099713.2"/>
    <property type="gene ID" value="ENSMUSG00000059173.21"/>
</dbReference>
<dbReference type="Ensembl" id="ENSMUST00000102655.10">
    <molecule id="Q61481-4"/>
    <property type="protein sequence ID" value="ENSMUSP00000099715.4"/>
    <property type="gene ID" value="ENSMUSG00000059173.21"/>
</dbReference>
<dbReference type="Ensembl" id="ENSMUST00000146076.9">
    <molecule id="Q61481-2"/>
    <property type="protein sequence ID" value="ENSMUSP00000160024.1"/>
    <property type="gene ID" value="ENSMUSG00000059173.21"/>
</dbReference>
<dbReference type="Ensembl" id="ENSMUST00000183775.8">
    <molecule id="Q61481-4"/>
    <property type="protein sequence ID" value="ENSMUSP00000139327.2"/>
    <property type="gene ID" value="ENSMUSG00000059173.21"/>
</dbReference>
<dbReference type="GeneID" id="18573"/>
<dbReference type="KEGG" id="mmu:18573"/>
<dbReference type="UCSC" id="uc008khd.2">
    <molecule id="Q61481-4"/>
    <property type="organism name" value="mouse"/>
</dbReference>
<dbReference type="UCSC" id="uc008khe.1">
    <property type="organism name" value="mouse"/>
</dbReference>
<dbReference type="UCSC" id="uc008khf.1">
    <property type="organism name" value="mouse"/>
</dbReference>
<dbReference type="AGR" id="MGI:1201792"/>
<dbReference type="CTD" id="5136"/>
<dbReference type="MGI" id="MGI:1201792">
    <property type="gene designation" value="Pde1a"/>
</dbReference>
<dbReference type="VEuPathDB" id="HostDB:ENSMUSG00000059173"/>
<dbReference type="eggNOG" id="KOG3688">
    <property type="taxonomic scope" value="Eukaryota"/>
</dbReference>
<dbReference type="GeneTree" id="ENSGT00940000157043"/>
<dbReference type="HOGENOM" id="CLU_005940_1_5_1"/>
<dbReference type="InParanoid" id="Q61481"/>
<dbReference type="OMA" id="MSHPPAE"/>
<dbReference type="OrthoDB" id="189220at2759"/>
<dbReference type="TreeFam" id="TF314638"/>
<dbReference type="BRENDA" id="3.1.4.17">
    <property type="organism ID" value="3474"/>
</dbReference>
<dbReference type="Reactome" id="R-MMU-111957">
    <property type="pathway name" value="Cam-PDE 1 activation"/>
</dbReference>
<dbReference type="Reactome" id="R-MMU-418457">
    <property type="pathway name" value="cGMP effects"/>
</dbReference>
<dbReference type="Reactome" id="R-MMU-418555">
    <property type="pathway name" value="G alpha (s) signalling events"/>
</dbReference>
<dbReference type="BioGRID-ORCS" id="18573">
    <property type="hits" value="7 hits in 76 CRISPR screens"/>
</dbReference>
<dbReference type="ChiTaRS" id="Pde1a">
    <property type="organism name" value="mouse"/>
</dbReference>
<dbReference type="PRO" id="PR:Q61481"/>
<dbReference type="Proteomes" id="UP000000589">
    <property type="component" value="Chromosome 2"/>
</dbReference>
<dbReference type="RNAct" id="Q61481">
    <property type="molecule type" value="protein"/>
</dbReference>
<dbReference type="Bgee" id="ENSMUSG00000059173">
    <property type="expression patterns" value="Expressed in spermatid and 204 other cell types or tissues"/>
</dbReference>
<dbReference type="ExpressionAtlas" id="Q61481">
    <property type="expression patterns" value="baseline and differential"/>
</dbReference>
<dbReference type="GO" id="GO:0031514">
    <property type="term" value="C:motile cilium"/>
    <property type="evidence" value="ECO:0007669"/>
    <property type="project" value="UniProtKB-SubCell"/>
</dbReference>
<dbReference type="GO" id="GO:0043025">
    <property type="term" value="C:neuronal cell body"/>
    <property type="evidence" value="ECO:0007669"/>
    <property type="project" value="Ensembl"/>
</dbReference>
<dbReference type="GO" id="GO:0036126">
    <property type="term" value="C:sperm flagellum"/>
    <property type="evidence" value="ECO:0000314"/>
    <property type="project" value="UniProtKB"/>
</dbReference>
<dbReference type="GO" id="GO:0004115">
    <property type="term" value="F:3',5'-cyclic-AMP phosphodiesterase activity"/>
    <property type="evidence" value="ECO:0000314"/>
    <property type="project" value="UniProtKB"/>
</dbReference>
<dbReference type="GO" id="GO:0047555">
    <property type="term" value="F:3',5'-cyclic-GMP phosphodiesterase activity"/>
    <property type="evidence" value="ECO:0000314"/>
    <property type="project" value="UniProtKB"/>
</dbReference>
<dbReference type="GO" id="GO:0005516">
    <property type="term" value="F:calmodulin binding"/>
    <property type="evidence" value="ECO:0007669"/>
    <property type="project" value="UniProtKB-KW"/>
</dbReference>
<dbReference type="GO" id="GO:0048101">
    <property type="term" value="F:calmodulin-activated 3',5'-cyclic-GMP phosphodiesterase activity"/>
    <property type="evidence" value="ECO:0000314"/>
    <property type="project" value="UniProtKB"/>
</dbReference>
<dbReference type="GO" id="GO:0004117">
    <property type="term" value="F:calmodulin-activated dual specificity 3',5'-cyclic-GMP, 3',5'-cyclic-AMP phosphodiesterase activity"/>
    <property type="evidence" value="ECO:0000314"/>
    <property type="project" value="UniProtKB"/>
</dbReference>
<dbReference type="GO" id="GO:0046872">
    <property type="term" value="F:metal ion binding"/>
    <property type="evidence" value="ECO:0007669"/>
    <property type="project" value="UniProtKB-KW"/>
</dbReference>
<dbReference type="GO" id="GO:0046069">
    <property type="term" value="P:cGMP catabolic process"/>
    <property type="evidence" value="ECO:0007669"/>
    <property type="project" value="Ensembl"/>
</dbReference>
<dbReference type="GO" id="GO:0034391">
    <property type="term" value="P:regulation of smooth muscle cell apoptotic process"/>
    <property type="evidence" value="ECO:0007669"/>
    <property type="project" value="Ensembl"/>
</dbReference>
<dbReference type="GO" id="GO:0048660">
    <property type="term" value="P:regulation of smooth muscle cell proliferation"/>
    <property type="evidence" value="ECO:0007669"/>
    <property type="project" value="Ensembl"/>
</dbReference>
<dbReference type="GO" id="GO:0007165">
    <property type="term" value="P:signal transduction"/>
    <property type="evidence" value="ECO:0007669"/>
    <property type="project" value="InterPro"/>
</dbReference>
<dbReference type="CDD" id="cd00077">
    <property type="entry name" value="HDc"/>
    <property type="match status" value="1"/>
</dbReference>
<dbReference type="FunFam" id="1.10.1300.10:FF:000011">
    <property type="entry name" value="Phosphodiesterase"/>
    <property type="match status" value="1"/>
</dbReference>
<dbReference type="Gene3D" id="1.10.1300.10">
    <property type="entry name" value="3'5'-cyclic nucleotide phosphodiesterase, catalytic domain"/>
    <property type="match status" value="1"/>
</dbReference>
<dbReference type="InterPro" id="IPR003607">
    <property type="entry name" value="HD/PDEase_dom"/>
</dbReference>
<dbReference type="InterPro" id="IPR023088">
    <property type="entry name" value="PDEase"/>
</dbReference>
<dbReference type="InterPro" id="IPR002073">
    <property type="entry name" value="PDEase_catalytic_dom"/>
</dbReference>
<dbReference type="InterPro" id="IPR036971">
    <property type="entry name" value="PDEase_catalytic_dom_sf"/>
</dbReference>
<dbReference type="InterPro" id="IPR023174">
    <property type="entry name" value="PDEase_CS"/>
</dbReference>
<dbReference type="InterPro" id="IPR013706">
    <property type="entry name" value="PDEase_N"/>
</dbReference>
<dbReference type="PANTHER" id="PTHR11347">
    <property type="entry name" value="CYCLIC NUCLEOTIDE PHOSPHODIESTERASE"/>
    <property type="match status" value="1"/>
</dbReference>
<dbReference type="Pfam" id="PF00233">
    <property type="entry name" value="PDEase_I"/>
    <property type="match status" value="1"/>
</dbReference>
<dbReference type="Pfam" id="PF08499">
    <property type="entry name" value="PDEase_I_N"/>
    <property type="match status" value="1"/>
</dbReference>
<dbReference type="PRINTS" id="PR00387">
    <property type="entry name" value="PDIESTERASE1"/>
</dbReference>
<dbReference type="SMART" id="SM00471">
    <property type="entry name" value="HDc"/>
    <property type="match status" value="1"/>
</dbReference>
<dbReference type="SUPFAM" id="SSF109604">
    <property type="entry name" value="HD-domain/PDEase-like"/>
    <property type="match status" value="1"/>
</dbReference>
<dbReference type="PROSITE" id="PS00126">
    <property type="entry name" value="PDEASE_I_1"/>
    <property type="match status" value="1"/>
</dbReference>
<dbReference type="PROSITE" id="PS51845">
    <property type="entry name" value="PDEASE_I_2"/>
    <property type="match status" value="1"/>
</dbReference>
<protein>
    <recommendedName>
        <fullName evidence="10">Dual specificity calcium/calmodulin-dependent 3',5'-cyclic nucleotide phosphodiesterase 1A</fullName>
        <shortName>Cam-PDE 1A</shortName>
        <ecNumber evidence="7">3.1.4.17</ecNumber>
    </recommendedName>
    <alternativeName>
        <fullName>61 kDa Cam-PDE</fullName>
    </alternativeName>
</protein>
<proteinExistence type="evidence at protein level"/>
<evidence type="ECO:0000250" key="1">
    <source>
        <dbReference type="UniProtKB" id="O76083"/>
    </source>
</evidence>
<evidence type="ECO:0000250" key="2">
    <source>
        <dbReference type="UniProtKB" id="P14100"/>
    </source>
</evidence>
<evidence type="ECO:0000250" key="3">
    <source>
        <dbReference type="UniProtKB" id="P54750"/>
    </source>
</evidence>
<evidence type="ECO:0000250" key="4">
    <source>
        <dbReference type="UniProtKB" id="Q01064"/>
    </source>
</evidence>
<evidence type="ECO:0000255" key="5">
    <source>
        <dbReference type="PROSITE-ProRule" id="PRU01192"/>
    </source>
</evidence>
<evidence type="ECO:0000256" key="6">
    <source>
        <dbReference type="SAM" id="MobiDB-lite"/>
    </source>
</evidence>
<evidence type="ECO:0000269" key="7">
    <source>
    </source>
</evidence>
<evidence type="ECO:0000303" key="8">
    <source>
    </source>
</evidence>
<evidence type="ECO:0000305" key="9"/>
<evidence type="ECO:0000305" key="10">
    <source>
    </source>
</evidence>
<evidence type="ECO:0000312" key="11">
    <source>
        <dbReference type="EMBL" id="AAF63857.1"/>
    </source>
</evidence>
<evidence type="ECO:0000312" key="12">
    <source>
        <dbReference type="EMBL" id="BAC31606.1"/>
    </source>
</evidence>
<evidence type="ECO:0000312" key="13">
    <source>
        <dbReference type="EMBL" id="EDL27255.1"/>
    </source>
</evidence>
<evidence type="ECO:0000312" key="14">
    <source>
        <dbReference type="MGI" id="MGI:1201792"/>
    </source>
</evidence>
<accession>Q61481</accession>
<accession>E9Q6V1</accession>
<accession>O35388</accession>
<accession>Q5I7S8</accession>
<accession>Q8BRR9</accession>
<accession>Q9JLL9</accession>
<organism>
    <name type="scientific">Mus musculus</name>
    <name type="common">Mouse</name>
    <dbReference type="NCBI Taxonomy" id="10090"/>
    <lineage>
        <taxon>Eukaryota</taxon>
        <taxon>Metazoa</taxon>
        <taxon>Chordata</taxon>
        <taxon>Craniata</taxon>
        <taxon>Vertebrata</taxon>
        <taxon>Euteleostomi</taxon>
        <taxon>Mammalia</taxon>
        <taxon>Eutheria</taxon>
        <taxon>Euarchontoglires</taxon>
        <taxon>Glires</taxon>
        <taxon>Rodentia</taxon>
        <taxon>Myomorpha</taxon>
        <taxon>Muroidea</taxon>
        <taxon>Muridae</taxon>
        <taxon>Murinae</taxon>
        <taxon>Mus</taxon>
        <taxon>Mus</taxon>
    </lineage>
</organism>
<name>PDE1A_MOUSE</name>
<reference evidence="11" key="1">
    <citation type="journal article" date="2005" name="Biol. Reprod.">
        <title>Identification of a new variant of PDE1A calmodulin-stimulated cyclic nucleotide phosphodiesterase expressed in mouse sperm.</title>
        <authorList>
            <person name="Vasta V."/>
            <person name="Sonnenburg W.K."/>
            <person name="Yan C."/>
            <person name="Soderling S.H."/>
            <person name="Shimizu-Albergine M."/>
            <person name="Beavo J.A."/>
        </authorList>
    </citation>
    <scope>NUCLEOTIDE SEQUENCE [MRNA] (ISOFORMS 2 AND 3)</scope>
    <scope>FUNCTION</scope>
    <scope>CATALYTIC ACTIVITY (ISOFORM 2)</scope>
    <scope>ACTIVITY REGULATION (ISOFORM 2)</scope>
    <scope>SUBCELLULAR LOCATION (ISOFORM 2)</scope>
    <scope>ALTERNATIVE SPLICING</scope>
    <scope>TISSUE SPECIFICITY</scope>
    <source>
        <strain evidence="11">C57BL/6J</strain>
        <tissue evidence="11">Testis</tissue>
    </source>
</reference>
<reference key="2">
    <citation type="submission" date="1996-07" db="EMBL/GenBank/DDBJ databases">
        <authorList>
            <person name="Yan C."/>
            <person name="Sonnenburg W.K."/>
            <person name="Zhao A.Z."/>
            <person name="Kwak K.S."/>
            <person name="Beavo J.A."/>
        </authorList>
    </citation>
    <scope>NUCLEOTIDE SEQUENCE [MRNA] (ISOFORM 1)</scope>
    <source>
        <strain>BALB/cJ</strain>
        <tissue>Brain</tissue>
    </source>
</reference>
<reference evidence="12" key="3">
    <citation type="journal article" date="2005" name="Science">
        <title>The transcriptional landscape of the mammalian genome.</title>
        <authorList>
            <person name="Carninci P."/>
            <person name="Kasukawa T."/>
            <person name="Katayama S."/>
            <person name="Gough J."/>
            <person name="Frith M.C."/>
            <person name="Maeda N."/>
            <person name="Oyama R."/>
            <person name="Ravasi T."/>
            <person name="Lenhard B."/>
            <person name="Wells C."/>
            <person name="Kodzius R."/>
            <person name="Shimokawa K."/>
            <person name="Bajic V.B."/>
            <person name="Brenner S.E."/>
            <person name="Batalov S."/>
            <person name="Forrest A.R."/>
            <person name="Zavolan M."/>
            <person name="Davis M.J."/>
            <person name="Wilming L.G."/>
            <person name="Aidinis V."/>
            <person name="Allen J.E."/>
            <person name="Ambesi-Impiombato A."/>
            <person name="Apweiler R."/>
            <person name="Aturaliya R.N."/>
            <person name="Bailey T.L."/>
            <person name="Bansal M."/>
            <person name="Baxter L."/>
            <person name="Beisel K.W."/>
            <person name="Bersano T."/>
            <person name="Bono H."/>
            <person name="Chalk A.M."/>
            <person name="Chiu K.P."/>
            <person name="Choudhary V."/>
            <person name="Christoffels A."/>
            <person name="Clutterbuck D.R."/>
            <person name="Crowe M.L."/>
            <person name="Dalla E."/>
            <person name="Dalrymple B.P."/>
            <person name="de Bono B."/>
            <person name="Della Gatta G."/>
            <person name="di Bernardo D."/>
            <person name="Down T."/>
            <person name="Engstrom P."/>
            <person name="Fagiolini M."/>
            <person name="Faulkner G."/>
            <person name="Fletcher C.F."/>
            <person name="Fukushima T."/>
            <person name="Furuno M."/>
            <person name="Futaki S."/>
            <person name="Gariboldi M."/>
            <person name="Georgii-Hemming P."/>
            <person name="Gingeras T.R."/>
            <person name="Gojobori T."/>
            <person name="Green R.E."/>
            <person name="Gustincich S."/>
            <person name="Harbers M."/>
            <person name="Hayashi Y."/>
            <person name="Hensch T.K."/>
            <person name="Hirokawa N."/>
            <person name="Hill D."/>
            <person name="Huminiecki L."/>
            <person name="Iacono M."/>
            <person name="Ikeo K."/>
            <person name="Iwama A."/>
            <person name="Ishikawa T."/>
            <person name="Jakt M."/>
            <person name="Kanapin A."/>
            <person name="Katoh M."/>
            <person name="Kawasawa Y."/>
            <person name="Kelso J."/>
            <person name="Kitamura H."/>
            <person name="Kitano H."/>
            <person name="Kollias G."/>
            <person name="Krishnan S.P."/>
            <person name="Kruger A."/>
            <person name="Kummerfeld S.K."/>
            <person name="Kurochkin I.V."/>
            <person name="Lareau L.F."/>
            <person name="Lazarevic D."/>
            <person name="Lipovich L."/>
            <person name="Liu J."/>
            <person name="Liuni S."/>
            <person name="McWilliam S."/>
            <person name="Madan Babu M."/>
            <person name="Madera M."/>
            <person name="Marchionni L."/>
            <person name="Matsuda H."/>
            <person name="Matsuzawa S."/>
            <person name="Miki H."/>
            <person name="Mignone F."/>
            <person name="Miyake S."/>
            <person name="Morris K."/>
            <person name="Mottagui-Tabar S."/>
            <person name="Mulder N."/>
            <person name="Nakano N."/>
            <person name="Nakauchi H."/>
            <person name="Ng P."/>
            <person name="Nilsson R."/>
            <person name="Nishiguchi S."/>
            <person name="Nishikawa S."/>
            <person name="Nori F."/>
            <person name="Ohara O."/>
            <person name="Okazaki Y."/>
            <person name="Orlando V."/>
            <person name="Pang K.C."/>
            <person name="Pavan W.J."/>
            <person name="Pavesi G."/>
            <person name="Pesole G."/>
            <person name="Petrovsky N."/>
            <person name="Piazza S."/>
            <person name="Reed J."/>
            <person name="Reid J.F."/>
            <person name="Ring B.Z."/>
            <person name="Ringwald M."/>
            <person name="Rost B."/>
            <person name="Ruan Y."/>
            <person name="Salzberg S.L."/>
            <person name="Sandelin A."/>
            <person name="Schneider C."/>
            <person name="Schoenbach C."/>
            <person name="Sekiguchi K."/>
            <person name="Semple C.A."/>
            <person name="Seno S."/>
            <person name="Sessa L."/>
            <person name="Sheng Y."/>
            <person name="Shibata Y."/>
            <person name="Shimada H."/>
            <person name="Shimada K."/>
            <person name="Silva D."/>
            <person name="Sinclair B."/>
            <person name="Sperling S."/>
            <person name="Stupka E."/>
            <person name="Sugiura K."/>
            <person name="Sultana R."/>
            <person name="Takenaka Y."/>
            <person name="Taki K."/>
            <person name="Tammoja K."/>
            <person name="Tan S.L."/>
            <person name="Tang S."/>
            <person name="Taylor M.S."/>
            <person name="Tegner J."/>
            <person name="Teichmann S.A."/>
            <person name="Ueda H.R."/>
            <person name="van Nimwegen E."/>
            <person name="Verardo R."/>
            <person name="Wei C.L."/>
            <person name="Yagi K."/>
            <person name="Yamanishi H."/>
            <person name="Zabarovsky E."/>
            <person name="Zhu S."/>
            <person name="Zimmer A."/>
            <person name="Hide W."/>
            <person name="Bult C."/>
            <person name="Grimmond S.M."/>
            <person name="Teasdale R.D."/>
            <person name="Liu E.T."/>
            <person name="Brusic V."/>
            <person name="Quackenbush J."/>
            <person name="Wahlestedt C."/>
            <person name="Mattick J.S."/>
            <person name="Hume D.A."/>
            <person name="Kai C."/>
            <person name="Sasaki D."/>
            <person name="Tomaru Y."/>
            <person name="Fukuda S."/>
            <person name="Kanamori-Katayama M."/>
            <person name="Suzuki M."/>
            <person name="Aoki J."/>
            <person name="Arakawa T."/>
            <person name="Iida J."/>
            <person name="Imamura K."/>
            <person name="Itoh M."/>
            <person name="Kato T."/>
            <person name="Kawaji H."/>
            <person name="Kawagashira N."/>
            <person name="Kawashima T."/>
            <person name="Kojima M."/>
            <person name="Kondo S."/>
            <person name="Konno H."/>
            <person name="Nakano K."/>
            <person name="Ninomiya N."/>
            <person name="Nishio T."/>
            <person name="Okada M."/>
            <person name="Plessy C."/>
            <person name="Shibata K."/>
            <person name="Shiraki T."/>
            <person name="Suzuki S."/>
            <person name="Tagami M."/>
            <person name="Waki K."/>
            <person name="Watahiki A."/>
            <person name="Okamura-Oho Y."/>
            <person name="Suzuki H."/>
            <person name="Kawai J."/>
            <person name="Hayashizaki Y."/>
        </authorList>
    </citation>
    <scope>NUCLEOTIDE SEQUENCE [LARGE SCALE MRNA] (ISOFORM 1)</scope>
    <source>
        <strain evidence="12">C57BL/6J</strain>
        <tissue evidence="12">Brain cortex</tissue>
    </source>
</reference>
<reference key="4">
    <citation type="journal article" date="2009" name="PLoS Biol.">
        <title>Lineage-specific biology revealed by a finished genome assembly of the mouse.</title>
        <authorList>
            <person name="Church D.M."/>
            <person name="Goodstadt L."/>
            <person name="Hillier L.W."/>
            <person name="Zody M.C."/>
            <person name="Goldstein S."/>
            <person name="She X."/>
            <person name="Bult C.J."/>
            <person name="Agarwala R."/>
            <person name="Cherry J.L."/>
            <person name="DiCuccio M."/>
            <person name="Hlavina W."/>
            <person name="Kapustin Y."/>
            <person name="Meric P."/>
            <person name="Maglott D."/>
            <person name="Birtle Z."/>
            <person name="Marques A.C."/>
            <person name="Graves T."/>
            <person name="Zhou S."/>
            <person name="Teague B."/>
            <person name="Potamousis K."/>
            <person name="Churas C."/>
            <person name="Place M."/>
            <person name="Herschleb J."/>
            <person name="Runnheim R."/>
            <person name="Forrest D."/>
            <person name="Amos-Landgraf J."/>
            <person name="Schwartz D.C."/>
            <person name="Cheng Z."/>
            <person name="Lindblad-Toh K."/>
            <person name="Eichler E.E."/>
            <person name="Ponting C.P."/>
        </authorList>
    </citation>
    <scope>NUCLEOTIDE SEQUENCE [LARGE SCALE GENOMIC DNA]</scope>
    <source>
        <strain>C57BL/6J</strain>
    </source>
</reference>
<reference evidence="13" key="5">
    <citation type="submission" date="2005-07" db="EMBL/GenBank/DDBJ databases">
        <authorList>
            <person name="Mural R.J."/>
            <person name="Adams M.D."/>
            <person name="Myers E.W."/>
            <person name="Smith H.O."/>
            <person name="Venter J.C."/>
        </authorList>
    </citation>
    <scope>NUCLEOTIDE SEQUENCE [LARGE SCALE GENOMIC DNA]</scope>
</reference>
<reference key="6">
    <citation type="journal article" date="2004" name="Genome Res.">
        <title>The status, quality, and expansion of the NIH full-length cDNA project: the Mammalian Gene Collection (MGC).</title>
        <authorList>
            <consortium name="The MGC Project Team"/>
        </authorList>
    </citation>
    <scope>NUCLEOTIDE SEQUENCE [LARGE SCALE MRNA] (ISOFORM 1)</scope>
</reference>
<reference key="7">
    <citation type="submission" date="1997-10" db="EMBL/GenBank/DDBJ databases">
        <authorList>
            <person name="Sonnenburg W.K."/>
            <person name="Rybalkin S.D."/>
            <person name="Bornfeldt K.E."/>
            <person name="Kwak K.S."/>
            <person name="Rybalkina I."/>
            <person name="Beavo J.A."/>
        </authorList>
    </citation>
    <scope>NUCLEOTIDE SEQUENCE [MRNA] OF 1-242 (ISOFORM 4)</scope>
    <source>
        <tissue>Heart</tissue>
    </source>
</reference>
<reference key="8">
    <citation type="journal article" date="2010" name="Cell">
        <title>A tissue-specific atlas of mouse protein phosphorylation and expression.</title>
        <authorList>
            <person name="Huttlin E.L."/>
            <person name="Jedrychowski M.P."/>
            <person name="Elias J.E."/>
            <person name="Goswami T."/>
            <person name="Rad R."/>
            <person name="Beausoleil S.A."/>
            <person name="Villen J."/>
            <person name="Haas W."/>
            <person name="Sowa M.E."/>
            <person name="Gygi S.P."/>
        </authorList>
    </citation>
    <scope>IDENTIFICATION BY MASS SPECTROMETRY [LARGE SCALE ANALYSIS]</scope>
    <source>
        <tissue>Brain</tissue>
    </source>
</reference>
<keyword id="KW-0025">Alternative splicing</keyword>
<keyword id="KW-0112">Calmodulin-binding</keyword>
<keyword id="KW-0114">cAMP</keyword>
<keyword id="KW-0966">Cell projection</keyword>
<keyword id="KW-0140">cGMP</keyword>
<keyword id="KW-0969">Cilium</keyword>
<keyword id="KW-0282">Flagellum</keyword>
<keyword id="KW-0378">Hydrolase</keyword>
<keyword id="KW-0460">Magnesium</keyword>
<keyword id="KW-0479">Metal-binding</keyword>
<keyword id="KW-1185">Reference proteome</keyword>
<keyword id="KW-0862">Zinc</keyword>
<gene>
    <name evidence="14" type="primary">Pde1a</name>
</gene>
<feature type="chain" id="PRO_0000198786" description="Dual specificity calcium/calmodulin-dependent 3',5'-cyclic nucleotide phosphodiesterase 1A">
    <location>
        <begin position="1"/>
        <end position="545"/>
    </location>
</feature>
<feature type="domain" description="PDEase" evidence="5">
    <location>
        <begin position="142"/>
        <end position="522"/>
    </location>
</feature>
<feature type="region of interest" description="Calmodulin-binding" evidence="2">
    <location>
        <begin position="24"/>
        <end position="44"/>
    </location>
</feature>
<feature type="region of interest" description="Calmodulin-binding" evidence="2">
    <location>
        <begin position="114"/>
        <end position="137"/>
    </location>
</feature>
<feature type="region of interest" description="Disordered" evidence="6">
    <location>
        <begin position="526"/>
        <end position="545"/>
    </location>
</feature>
<feature type="active site" description="Proton donor" evidence="1">
    <location>
        <position position="219"/>
    </location>
</feature>
<feature type="binding site" evidence="4">
    <location>
        <position position="223"/>
    </location>
    <ligand>
        <name>Zn(2+)</name>
        <dbReference type="ChEBI" id="CHEBI:29105"/>
    </ligand>
</feature>
<feature type="binding site" evidence="4">
    <location>
        <position position="259"/>
    </location>
    <ligand>
        <name>Zn(2+)</name>
        <dbReference type="ChEBI" id="CHEBI:29105"/>
    </ligand>
</feature>
<feature type="binding site" evidence="4">
    <location>
        <position position="260"/>
    </location>
    <ligand>
        <name>Mg(2+)</name>
        <dbReference type="ChEBI" id="CHEBI:18420"/>
    </ligand>
</feature>
<feature type="binding site" evidence="4">
    <location>
        <position position="260"/>
    </location>
    <ligand>
        <name>Zn(2+)</name>
        <dbReference type="ChEBI" id="CHEBI:29105"/>
    </ligand>
</feature>
<feature type="binding site" evidence="4">
    <location>
        <position position="366"/>
    </location>
    <ligand>
        <name>Zn(2+)</name>
        <dbReference type="ChEBI" id="CHEBI:29105"/>
    </ligand>
</feature>
<feature type="splice variant" id="VSP_060311" description="In isoform 2 and isoform 3." evidence="7">
    <original>MGSTDTDIEELENATYKYLIGEQTEKMWQRLKGILRCLVKQLEKGDVNVVDLKKNIEYAASVLEAVYIDET</original>
    <variation>MIF</variation>
    <location>
        <begin position="1"/>
        <end position="71"/>
    </location>
</feature>
<feature type="splice variant" id="VSP_004551" description="In isoform 4." evidence="9">
    <original>MGSTDTDIEELENATYKYLIGEQTEKMWQRLKGI</original>
    <variation>MDEYVTIRKKHLQRPIFR</variation>
    <location>
        <begin position="1"/>
        <end position="34"/>
    </location>
</feature>
<feature type="splice variant" id="VSP_060312" description="In isoform 3." evidence="7">
    <original>GELDLHKNSEEL</original>
    <variation>EPKSILQEQRCC</variation>
    <location>
        <begin position="522"/>
        <end position="533"/>
    </location>
</feature>
<feature type="splice variant" id="VSP_060313" description="In isoform 2." evidence="7">
    <original>EL</original>
    <variation>CC</variation>
    <location>
        <begin position="523"/>
        <end position="524"/>
    </location>
</feature>
<feature type="splice variant" id="VSP_060314" description="In isoform 2." evidence="7">
    <location>
        <begin position="525"/>
        <end position="545"/>
    </location>
</feature>
<feature type="splice variant" id="VSP_060315" description="In isoform 3." evidence="7">
    <location>
        <begin position="534"/>
        <end position="545"/>
    </location>
</feature>
<comment type="function">
    <text evidence="7">Calcium/calmodulin-dependent cyclic nucleotide phosphodiesterase with a dual specificity for the second messengers cGMP and cAMP, which are key regulators of many important physiological processes. Has a higher efficiency with cGMP compared to cAMP.</text>
</comment>
<comment type="catalytic activity">
    <reaction evidence="7">
        <text>a nucleoside 3',5'-cyclic phosphate + H2O = a nucleoside 5'-phosphate + H(+)</text>
        <dbReference type="Rhea" id="RHEA:14653"/>
        <dbReference type="ChEBI" id="CHEBI:15377"/>
        <dbReference type="ChEBI" id="CHEBI:15378"/>
        <dbReference type="ChEBI" id="CHEBI:57867"/>
        <dbReference type="ChEBI" id="CHEBI:58464"/>
        <dbReference type="EC" id="3.1.4.17"/>
    </reaction>
    <physiologicalReaction direction="left-to-right" evidence="10">
        <dbReference type="Rhea" id="RHEA:14654"/>
    </physiologicalReaction>
</comment>
<comment type="catalytic activity">
    <molecule>Isoform 2</molecule>
    <reaction evidence="7">
        <text>a nucleoside 3',5'-cyclic phosphate + H2O = a nucleoside 5'-phosphate + H(+)</text>
        <dbReference type="Rhea" id="RHEA:14653"/>
        <dbReference type="ChEBI" id="CHEBI:15377"/>
        <dbReference type="ChEBI" id="CHEBI:15378"/>
        <dbReference type="ChEBI" id="CHEBI:57867"/>
        <dbReference type="ChEBI" id="CHEBI:58464"/>
        <dbReference type="EC" id="3.1.4.17"/>
    </reaction>
    <physiologicalReaction direction="left-to-right" evidence="10">
        <dbReference type="Rhea" id="RHEA:14654"/>
    </physiologicalReaction>
</comment>
<comment type="catalytic activity">
    <reaction evidence="7">
        <text>3',5'-cyclic GMP + H2O = GMP + H(+)</text>
        <dbReference type="Rhea" id="RHEA:16957"/>
        <dbReference type="ChEBI" id="CHEBI:15377"/>
        <dbReference type="ChEBI" id="CHEBI:15378"/>
        <dbReference type="ChEBI" id="CHEBI:57746"/>
        <dbReference type="ChEBI" id="CHEBI:58115"/>
    </reaction>
    <physiologicalReaction direction="left-to-right" evidence="10">
        <dbReference type="Rhea" id="RHEA:16958"/>
    </physiologicalReaction>
</comment>
<comment type="catalytic activity">
    <reaction evidence="7">
        <text>3',5'-cyclic AMP + H2O = AMP + H(+)</text>
        <dbReference type="Rhea" id="RHEA:25277"/>
        <dbReference type="ChEBI" id="CHEBI:15377"/>
        <dbReference type="ChEBI" id="CHEBI:15378"/>
        <dbReference type="ChEBI" id="CHEBI:58165"/>
        <dbReference type="ChEBI" id="CHEBI:456215"/>
    </reaction>
    <physiologicalReaction direction="left-to-right" evidence="10">
        <dbReference type="Rhea" id="RHEA:25278"/>
    </physiologicalReaction>
</comment>
<comment type="catalytic activity">
    <molecule>Isoform 2</molecule>
    <reaction evidence="7">
        <text>3',5'-cyclic GMP + H2O = GMP + H(+)</text>
        <dbReference type="Rhea" id="RHEA:16957"/>
        <dbReference type="ChEBI" id="CHEBI:15377"/>
        <dbReference type="ChEBI" id="CHEBI:15378"/>
        <dbReference type="ChEBI" id="CHEBI:57746"/>
        <dbReference type="ChEBI" id="CHEBI:58115"/>
    </reaction>
    <physiologicalReaction direction="left-to-right" evidence="10">
        <dbReference type="Rhea" id="RHEA:16958"/>
    </physiologicalReaction>
</comment>
<comment type="catalytic activity">
    <molecule>Isoform 2</molecule>
    <reaction evidence="7">
        <text>3',5'-cyclic AMP + H2O = AMP + H(+)</text>
        <dbReference type="Rhea" id="RHEA:25277"/>
        <dbReference type="ChEBI" id="CHEBI:15377"/>
        <dbReference type="ChEBI" id="CHEBI:15378"/>
        <dbReference type="ChEBI" id="CHEBI:58165"/>
        <dbReference type="ChEBI" id="CHEBI:456215"/>
    </reaction>
    <physiologicalReaction direction="left-to-right" evidence="10">
        <dbReference type="Rhea" id="RHEA:25278"/>
    </physiologicalReaction>
</comment>
<comment type="cofactor">
    <cofactor evidence="4">
        <name>Zn(2+)</name>
        <dbReference type="ChEBI" id="CHEBI:29105"/>
    </cofactor>
    <text evidence="4">Binds 2 divalent metal cations per subunit. Site 1 may preferentially bind zinc ions.</text>
</comment>
<comment type="cofactor">
    <cofactor evidence="4">
        <name>Mg(2+)</name>
        <dbReference type="ChEBI" id="CHEBI:18420"/>
    </cofactor>
    <text evidence="4">Binds 2 divalent metal cations per subunit. Site 2 has a preference for magnesium ions.</text>
</comment>
<comment type="activity regulation">
    <text evidence="7">Type I PDE are activated by the binding of calmodulin in the presence of Ca(2+).</text>
</comment>
<comment type="activity regulation">
    <molecule>Isoform 2</molecule>
    <text evidence="7">Activated by the binding of calmodulin in the presence of Ca(2+).</text>
</comment>
<comment type="subunit">
    <text evidence="2 3">Homodimer (By similarity). Interacts with YWHAZ (By similarity).</text>
</comment>
<comment type="subcellular location">
    <molecule>Isoform 2</molecule>
    <subcellularLocation>
        <location evidence="7">Cell projection</location>
        <location evidence="7">Cilium</location>
        <location evidence="7">Flagellum</location>
    </subcellularLocation>
    <text evidence="7">Concentrates in the tail of mature sperm.</text>
</comment>
<comment type="alternative products">
    <event type="alternative splicing"/>
    <isoform>
        <id>Q61481-4</id>
        <name>1</name>
        <name evidence="8">Pde1a_v2</name>
        <name evidence="8">mmPDE1A2</name>
        <sequence type="displayed"/>
    </isoform>
    <isoform>
        <id>Q61481-5</id>
        <name>2</name>
        <name evidence="8">Pde1a_v7</name>
        <name evidence="8">mmPDE1A7</name>
        <sequence type="described" ref="VSP_060311 VSP_060313 VSP_060314"/>
    </isoform>
    <isoform>
        <id>Q61481-6</id>
        <name>3</name>
        <name evidence="8">Pde1a_v9</name>
        <name evidence="8">mmPDE1A9</name>
        <sequence type="described" ref="VSP_060311 VSP_060312 VSP_060315"/>
    </isoform>
    <isoform>
        <id>Q61481-2</id>
        <name>4</name>
        <name>PDE1A1</name>
        <name evidence="8">Pde1a_v1</name>
        <sequence type="described" ref="VSP_004551"/>
    </isoform>
</comment>
<comment type="tissue specificity">
    <text evidence="7">Expressed in brain, kidney and testis.</text>
</comment>
<comment type="similarity">
    <text evidence="9">Belongs to the cyclic nucleotide phosphodiesterase family. PDE1 subfamily.</text>
</comment>
<comment type="sequence caution" evidence="9">
    <conflict type="miscellaneous discrepancy">
        <sequence resource="EMBL-CDS" id="AAB03319"/>
    </conflict>
    <text>Probable cloning artifact.</text>
</comment>
<sequence>MGSTDTDIEELENATYKYLIGEQTEKMWQRLKGILRCLVKQLEKGDVNVVDLKKNIEYAASVLEAVYIDETRRLLDTEDELSDIQTDSVPSEVRDWLASTFTRKMGMMKKKPEEKPKFRSIVHAVQAGIFVERMYRKNYHMVGLTYPAAVIVTLKEVDKWSFDVFALNEASGEHSLKFMIYELFTRYDLINRFKIPVSCLIAFAEALEVGYSKHKNPYHNLVHAADVTQTVHYIMLHTGIMHWLTELEILAMVFAAAIHDYEHTGTTNNFHIQTRSDVAILYNDRSVLENHHVSAAYRLMQEEEMNILVNLSKDDWRDLRNLVIEMVLATDMSGHFQQIKNIRNSLQQPEGIDRAKTMSLILHAADISHPAKTWKLHYRWTMALMEEFFLQGDKEAELGLPFSPLCDRKSTMVAQSQIGFIDFIVEPTFSLLTDSTEKIVIPLIEEASKSQSSNYGASSSSTMIGFHVADSLRRSNTKGSVCDGSYAPDYSLSAVDLKSFKNNLVDIIQQNKERWKELAAQGELDLHKNSEELGNTEEKHADTRP</sequence>